<name>RL33_PROMA</name>
<organism>
    <name type="scientific">Prochlorococcus marinus (strain SARG / CCMP1375 / SS120)</name>
    <dbReference type="NCBI Taxonomy" id="167539"/>
    <lineage>
        <taxon>Bacteria</taxon>
        <taxon>Bacillati</taxon>
        <taxon>Cyanobacteriota</taxon>
        <taxon>Cyanophyceae</taxon>
        <taxon>Synechococcales</taxon>
        <taxon>Prochlorococcaceae</taxon>
        <taxon>Prochlorococcus</taxon>
    </lineage>
</organism>
<reference key="1">
    <citation type="journal article" date="2003" name="Proc. Natl. Acad. Sci. U.S.A.">
        <title>Genome sequence of the cyanobacterium Prochlorococcus marinus SS120, a nearly minimal oxyphototrophic genome.</title>
        <authorList>
            <person name="Dufresne A."/>
            <person name="Salanoubat M."/>
            <person name="Partensky F."/>
            <person name="Artiguenave F."/>
            <person name="Axmann I.M."/>
            <person name="Barbe V."/>
            <person name="Duprat S."/>
            <person name="Galperin M.Y."/>
            <person name="Koonin E.V."/>
            <person name="Le Gall F."/>
            <person name="Makarova K.S."/>
            <person name="Ostrowski M."/>
            <person name="Oztas S."/>
            <person name="Robert C."/>
            <person name="Rogozin I.B."/>
            <person name="Scanlan D.J."/>
            <person name="Tandeau de Marsac N."/>
            <person name="Weissenbach J."/>
            <person name="Wincker P."/>
            <person name="Wolf Y.I."/>
            <person name="Hess W.R."/>
        </authorList>
    </citation>
    <scope>NUCLEOTIDE SEQUENCE [LARGE SCALE GENOMIC DNA]</scope>
    <source>
        <strain>SARG / CCMP1375 / SS120</strain>
    </source>
</reference>
<proteinExistence type="inferred from homology"/>
<comment type="similarity">
    <text evidence="1">Belongs to the bacterial ribosomal protein bL33 family.</text>
</comment>
<sequence length="65" mass="7496">MAKKGTRIVVTLECTECRSAPASEKRSPGVSRYTTEKNRRNTSDRLELKKFCPQLNKMTIHKEIK</sequence>
<feature type="chain" id="PRO_1000115153" description="Large ribosomal subunit protein bL33">
    <location>
        <begin position="1"/>
        <end position="65"/>
    </location>
</feature>
<feature type="region of interest" description="Disordered" evidence="2">
    <location>
        <begin position="20"/>
        <end position="42"/>
    </location>
</feature>
<protein>
    <recommendedName>
        <fullName evidence="1">Large ribosomal subunit protein bL33</fullName>
    </recommendedName>
    <alternativeName>
        <fullName evidence="3">50S ribosomal protein L33</fullName>
    </alternativeName>
</protein>
<accession>Q7VBX5</accession>
<dbReference type="EMBL" id="AE017126">
    <property type="protein sequence ID" value="AAQ00012.1"/>
    <property type="molecule type" value="Genomic_DNA"/>
</dbReference>
<dbReference type="RefSeq" id="NP_875359.1">
    <property type="nucleotide sequence ID" value="NC_005042.1"/>
</dbReference>
<dbReference type="RefSeq" id="WP_011125119.1">
    <property type="nucleotide sequence ID" value="NC_005042.1"/>
</dbReference>
<dbReference type="SMR" id="Q7VBX5"/>
<dbReference type="STRING" id="167539.Pro_0967"/>
<dbReference type="EnsemblBacteria" id="AAQ00012">
    <property type="protein sequence ID" value="AAQ00012"/>
    <property type="gene ID" value="Pro_0967"/>
</dbReference>
<dbReference type="KEGG" id="pma:Pro_0967"/>
<dbReference type="PATRIC" id="fig|167539.5.peg.1015"/>
<dbReference type="eggNOG" id="COG0267">
    <property type="taxonomic scope" value="Bacteria"/>
</dbReference>
<dbReference type="HOGENOM" id="CLU_190949_3_0_3"/>
<dbReference type="OrthoDB" id="9801333at2"/>
<dbReference type="Proteomes" id="UP000001420">
    <property type="component" value="Chromosome"/>
</dbReference>
<dbReference type="GO" id="GO:0005737">
    <property type="term" value="C:cytoplasm"/>
    <property type="evidence" value="ECO:0007669"/>
    <property type="project" value="UniProtKB-ARBA"/>
</dbReference>
<dbReference type="GO" id="GO:1990904">
    <property type="term" value="C:ribonucleoprotein complex"/>
    <property type="evidence" value="ECO:0007669"/>
    <property type="project" value="UniProtKB-KW"/>
</dbReference>
<dbReference type="GO" id="GO:0005840">
    <property type="term" value="C:ribosome"/>
    <property type="evidence" value="ECO:0007669"/>
    <property type="project" value="UniProtKB-KW"/>
</dbReference>
<dbReference type="GO" id="GO:0003735">
    <property type="term" value="F:structural constituent of ribosome"/>
    <property type="evidence" value="ECO:0007669"/>
    <property type="project" value="InterPro"/>
</dbReference>
<dbReference type="GO" id="GO:0006412">
    <property type="term" value="P:translation"/>
    <property type="evidence" value="ECO:0007669"/>
    <property type="project" value="UniProtKB-UniRule"/>
</dbReference>
<dbReference type="Gene3D" id="2.20.28.120">
    <property type="entry name" value="Ribosomal protein L33"/>
    <property type="match status" value="1"/>
</dbReference>
<dbReference type="HAMAP" id="MF_00294">
    <property type="entry name" value="Ribosomal_bL33"/>
    <property type="match status" value="1"/>
</dbReference>
<dbReference type="InterPro" id="IPR001705">
    <property type="entry name" value="Ribosomal_bL33"/>
</dbReference>
<dbReference type="InterPro" id="IPR018264">
    <property type="entry name" value="Ribosomal_bL33_CS"/>
</dbReference>
<dbReference type="InterPro" id="IPR038584">
    <property type="entry name" value="Ribosomal_bL33_sf"/>
</dbReference>
<dbReference type="InterPro" id="IPR011332">
    <property type="entry name" value="Ribosomal_zn-bd"/>
</dbReference>
<dbReference type="NCBIfam" id="NF001764">
    <property type="entry name" value="PRK00504.1"/>
    <property type="match status" value="1"/>
</dbReference>
<dbReference type="NCBIfam" id="NF001860">
    <property type="entry name" value="PRK00595.1"/>
    <property type="match status" value="1"/>
</dbReference>
<dbReference type="NCBIfam" id="TIGR01023">
    <property type="entry name" value="rpmG_bact"/>
    <property type="match status" value="1"/>
</dbReference>
<dbReference type="PANTHER" id="PTHR43168">
    <property type="entry name" value="50S RIBOSOMAL PROTEIN L33, CHLOROPLASTIC"/>
    <property type="match status" value="1"/>
</dbReference>
<dbReference type="PANTHER" id="PTHR43168:SF2">
    <property type="entry name" value="LARGE RIBOSOMAL SUBUNIT PROTEIN BL33C"/>
    <property type="match status" value="1"/>
</dbReference>
<dbReference type="Pfam" id="PF00471">
    <property type="entry name" value="Ribosomal_L33"/>
    <property type="match status" value="1"/>
</dbReference>
<dbReference type="SUPFAM" id="SSF57829">
    <property type="entry name" value="Zn-binding ribosomal proteins"/>
    <property type="match status" value="1"/>
</dbReference>
<dbReference type="PROSITE" id="PS00582">
    <property type="entry name" value="RIBOSOMAL_L33"/>
    <property type="match status" value="1"/>
</dbReference>
<gene>
    <name evidence="1" type="primary">rpmG</name>
    <name evidence="1" type="synonym">rpl33</name>
    <name type="ordered locus">Pro_0967</name>
</gene>
<keyword id="KW-1185">Reference proteome</keyword>
<keyword id="KW-0687">Ribonucleoprotein</keyword>
<keyword id="KW-0689">Ribosomal protein</keyword>
<evidence type="ECO:0000255" key="1">
    <source>
        <dbReference type="HAMAP-Rule" id="MF_00294"/>
    </source>
</evidence>
<evidence type="ECO:0000256" key="2">
    <source>
        <dbReference type="SAM" id="MobiDB-lite"/>
    </source>
</evidence>
<evidence type="ECO:0000305" key="3"/>